<organism>
    <name type="scientific">Bacillus anthracis (strain A0248)</name>
    <dbReference type="NCBI Taxonomy" id="592021"/>
    <lineage>
        <taxon>Bacteria</taxon>
        <taxon>Bacillati</taxon>
        <taxon>Bacillota</taxon>
        <taxon>Bacilli</taxon>
        <taxon>Bacillales</taxon>
        <taxon>Bacillaceae</taxon>
        <taxon>Bacillus</taxon>
        <taxon>Bacillus cereus group</taxon>
    </lineage>
</organism>
<reference key="1">
    <citation type="submission" date="2009-04" db="EMBL/GenBank/DDBJ databases">
        <title>Genome sequence of Bacillus anthracis A0248.</title>
        <authorList>
            <person name="Dodson R.J."/>
            <person name="Munk A.C."/>
            <person name="Bruce D."/>
            <person name="Detter C."/>
            <person name="Tapia R."/>
            <person name="Sutton G."/>
            <person name="Sims D."/>
            <person name="Brettin T."/>
        </authorList>
    </citation>
    <scope>NUCLEOTIDE SEQUENCE [LARGE SCALE GENOMIC DNA]</scope>
    <source>
        <strain>A0248</strain>
    </source>
</reference>
<feature type="chain" id="PRO_1000124667" description="3-phosphoshikimate 1-carboxyvinyltransferase">
    <location>
        <begin position="1"/>
        <end position="429"/>
    </location>
</feature>
<feature type="active site" description="Proton acceptor" evidence="1">
    <location>
        <position position="316"/>
    </location>
</feature>
<feature type="binding site" evidence="1">
    <location>
        <position position="23"/>
    </location>
    <ligand>
        <name>3-phosphoshikimate</name>
        <dbReference type="ChEBI" id="CHEBI:145989"/>
    </ligand>
</feature>
<feature type="binding site" evidence="1">
    <location>
        <position position="23"/>
    </location>
    <ligand>
        <name>phosphoenolpyruvate</name>
        <dbReference type="ChEBI" id="CHEBI:58702"/>
    </ligand>
</feature>
<feature type="binding site" evidence="1">
    <location>
        <position position="24"/>
    </location>
    <ligand>
        <name>3-phosphoshikimate</name>
        <dbReference type="ChEBI" id="CHEBI:145989"/>
    </ligand>
</feature>
<feature type="binding site" evidence="1">
    <location>
        <position position="28"/>
    </location>
    <ligand>
        <name>3-phosphoshikimate</name>
        <dbReference type="ChEBI" id="CHEBI:145989"/>
    </ligand>
</feature>
<feature type="binding site" evidence="1">
    <location>
        <position position="95"/>
    </location>
    <ligand>
        <name>phosphoenolpyruvate</name>
        <dbReference type="ChEBI" id="CHEBI:58702"/>
    </ligand>
</feature>
<feature type="binding site" evidence="1">
    <location>
        <position position="123"/>
    </location>
    <ligand>
        <name>phosphoenolpyruvate</name>
        <dbReference type="ChEBI" id="CHEBI:58702"/>
    </ligand>
</feature>
<feature type="binding site" evidence="1">
    <location>
        <position position="168"/>
    </location>
    <ligand>
        <name>3-phosphoshikimate</name>
        <dbReference type="ChEBI" id="CHEBI:145989"/>
    </ligand>
</feature>
<feature type="binding site" evidence="1">
    <location>
        <position position="170"/>
    </location>
    <ligand>
        <name>3-phosphoshikimate</name>
        <dbReference type="ChEBI" id="CHEBI:145989"/>
    </ligand>
</feature>
<feature type="binding site" evidence="1">
    <location>
        <position position="170"/>
    </location>
    <ligand>
        <name>phosphoenolpyruvate</name>
        <dbReference type="ChEBI" id="CHEBI:58702"/>
    </ligand>
</feature>
<feature type="binding site" evidence="1">
    <location>
        <position position="316"/>
    </location>
    <ligand>
        <name>3-phosphoshikimate</name>
        <dbReference type="ChEBI" id="CHEBI:145989"/>
    </ligand>
</feature>
<feature type="binding site" evidence="1">
    <location>
        <position position="343"/>
    </location>
    <ligand>
        <name>3-phosphoshikimate</name>
        <dbReference type="ChEBI" id="CHEBI:145989"/>
    </ligand>
</feature>
<feature type="binding site" evidence="1">
    <location>
        <position position="347"/>
    </location>
    <ligand>
        <name>phosphoenolpyruvate</name>
        <dbReference type="ChEBI" id="CHEBI:58702"/>
    </ligand>
</feature>
<feature type="binding site" evidence="1">
    <location>
        <position position="389"/>
    </location>
    <ligand>
        <name>phosphoenolpyruvate</name>
        <dbReference type="ChEBI" id="CHEBI:58702"/>
    </ligand>
</feature>
<accession>C3NZR4</accession>
<proteinExistence type="inferred from homology"/>
<dbReference type="EC" id="2.5.1.19" evidence="1"/>
<dbReference type="EMBL" id="CP001598">
    <property type="protein sequence ID" value="ACQ49969.1"/>
    <property type="molecule type" value="Genomic_DNA"/>
</dbReference>
<dbReference type="RefSeq" id="WP_000664623.1">
    <property type="nucleotide sequence ID" value="NC_012659.1"/>
</dbReference>
<dbReference type="SMR" id="C3NZR4"/>
<dbReference type="GeneID" id="45022771"/>
<dbReference type="KEGG" id="bai:BAA_3008"/>
<dbReference type="HOGENOM" id="CLU_024321_0_1_9"/>
<dbReference type="UniPathway" id="UPA00053">
    <property type="reaction ID" value="UER00089"/>
</dbReference>
<dbReference type="GO" id="GO:0005737">
    <property type="term" value="C:cytoplasm"/>
    <property type="evidence" value="ECO:0007669"/>
    <property type="project" value="UniProtKB-SubCell"/>
</dbReference>
<dbReference type="GO" id="GO:0003866">
    <property type="term" value="F:3-phosphoshikimate 1-carboxyvinyltransferase activity"/>
    <property type="evidence" value="ECO:0007669"/>
    <property type="project" value="UniProtKB-UniRule"/>
</dbReference>
<dbReference type="GO" id="GO:0008652">
    <property type="term" value="P:amino acid biosynthetic process"/>
    <property type="evidence" value="ECO:0007669"/>
    <property type="project" value="UniProtKB-KW"/>
</dbReference>
<dbReference type="GO" id="GO:0009073">
    <property type="term" value="P:aromatic amino acid family biosynthetic process"/>
    <property type="evidence" value="ECO:0007669"/>
    <property type="project" value="UniProtKB-KW"/>
</dbReference>
<dbReference type="GO" id="GO:0009423">
    <property type="term" value="P:chorismate biosynthetic process"/>
    <property type="evidence" value="ECO:0007669"/>
    <property type="project" value="UniProtKB-UniRule"/>
</dbReference>
<dbReference type="CDD" id="cd01556">
    <property type="entry name" value="EPSP_synthase"/>
    <property type="match status" value="1"/>
</dbReference>
<dbReference type="FunFam" id="3.65.10.10:FF:000005">
    <property type="entry name" value="3-phosphoshikimate 1-carboxyvinyltransferase"/>
    <property type="match status" value="1"/>
</dbReference>
<dbReference type="FunFam" id="3.65.10.10:FF:000006">
    <property type="entry name" value="3-phosphoshikimate 1-carboxyvinyltransferase"/>
    <property type="match status" value="1"/>
</dbReference>
<dbReference type="Gene3D" id="3.65.10.10">
    <property type="entry name" value="Enolpyruvate transferase domain"/>
    <property type="match status" value="2"/>
</dbReference>
<dbReference type="HAMAP" id="MF_00210">
    <property type="entry name" value="EPSP_synth"/>
    <property type="match status" value="1"/>
</dbReference>
<dbReference type="InterPro" id="IPR001986">
    <property type="entry name" value="Enolpyruvate_Tfrase_dom"/>
</dbReference>
<dbReference type="InterPro" id="IPR036968">
    <property type="entry name" value="Enolpyruvate_Tfrase_sf"/>
</dbReference>
<dbReference type="InterPro" id="IPR006264">
    <property type="entry name" value="EPSP_synthase"/>
</dbReference>
<dbReference type="InterPro" id="IPR023193">
    <property type="entry name" value="EPSP_synthase_CS"/>
</dbReference>
<dbReference type="InterPro" id="IPR013792">
    <property type="entry name" value="RNA3'P_cycl/enolpyr_Trfase_a/b"/>
</dbReference>
<dbReference type="NCBIfam" id="TIGR01356">
    <property type="entry name" value="aroA"/>
    <property type="match status" value="1"/>
</dbReference>
<dbReference type="PANTHER" id="PTHR21090">
    <property type="entry name" value="AROM/DEHYDROQUINATE SYNTHASE"/>
    <property type="match status" value="1"/>
</dbReference>
<dbReference type="PANTHER" id="PTHR21090:SF5">
    <property type="entry name" value="PENTAFUNCTIONAL AROM POLYPEPTIDE"/>
    <property type="match status" value="1"/>
</dbReference>
<dbReference type="Pfam" id="PF00275">
    <property type="entry name" value="EPSP_synthase"/>
    <property type="match status" value="1"/>
</dbReference>
<dbReference type="PIRSF" id="PIRSF000505">
    <property type="entry name" value="EPSPS"/>
    <property type="match status" value="1"/>
</dbReference>
<dbReference type="SUPFAM" id="SSF55205">
    <property type="entry name" value="EPT/RTPC-like"/>
    <property type="match status" value="1"/>
</dbReference>
<dbReference type="PROSITE" id="PS00104">
    <property type="entry name" value="EPSP_SYNTHASE_1"/>
    <property type="match status" value="1"/>
</dbReference>
<dbReference type="PROSITE" id="PS00885">
    <property type="entry name" value="EPSP_SYNTHASE_2"/>
    <property type="match status" value="1"/>
</dbReference>
<name>AROA_BACAA</name>
<evidence type="ECO:0000255" key="1">
    <source>
        <dbReference type="HAMAP-Rule" id="MF_00210"/>
    </source>
</evidence>
<keyword id="KW-0028">Amino-acid biosynthesis</keyword>
<keyword id="KW-0057">Aromatic amino acid biosynthesis</keyword>
<keyword id="KW-0963">Cytoplasm</keyword>
<keyword id="KW-0808">Transferase</keyword>
<sequence>MKERTIQPVNNGLNGNITIPGDKSISHRAVMFGAIAEGTTTIKGFLPGADCLSTISCFKEMGVDIVQNGDEVTVVGKGLEGLQEPKAVLDVGNSGTTIRLMSGILANTPFLSCVQGDTSIAKRPMKRVTNPLKQMGANIDGREEGTFTPLTIRGGDLKAIEYTSPVASAQVKSAILLAGLRAEGVTAVTEPHISRDHTERMLEAFGVKVTREGKTVKLAGGQKLTATDVQVPGDVSSAAFFLVAGAIIPNSKLVLENVGMNPTRTGIIDVLEKMGATFTVEPINEGASEPAANITIETSSLKGIEIGGDIIPRLIDEIPVIALAATQAEGITVIKDAHELKVKETNRIDTVVAELTKLGARIEATDDRMIIYGKSALKGNTVNSYGDHRIGMMLAIAGCIAEGKTIIEDAEAVGVSYPTFFEELQKLAK</sequence>
<protein>
    <recommendedName>
        <fullName evidence="1">3-phosphoshikimate 1-carboxyvinyltransferase</fullName>
        <ecNumber evidence="1">2.5.1.19</ecNumber>
    </recommendedName>
    <alternativeName>
        <fullName evidence="1">5-enolpyruvylshikimate-3-phosphate synthase</fullName>
        <shortName evidence="1">EPSP synthase</shortName>
        <shortName evidence="1">EPSPS</shortName>
    </alternativeName>
</protein>
<gene>
    <name evidence="1" type="primary">aroA</name>
    <name type="ordered locus">BAA_3008</name>
</gene>
<comment type="function">
    <text evidence="1">Catalyzes the transfer of the enolpyruvyl moiety of phosphoenolpyruvate (PEP) to the 5-hydroxyl of shikimate-3-phosphate (S3P) to produce enolpyruvyl shikimate-3-phosphate and inorganic phosphate.</text>
</comment>
<comment type="catalytic activity">
    <reaction evidence="1">
        <text>3-phosphoshikimate + phosphoenolpyruvate = 5-O-(1-carboxyvinyl)-3-phosphoshikimate + phosphate</text>
        <dbReference type="Rhea" id="RHEA:21256"/>
        <dbReference type="ChEBI" id="CHEBI:43474"/>
        <dbReference type="ChEBI" id="CHEBI:57701"/>
        <dbReference type="ChEBI" id="CHEBI:58702"/>
        <dbReference type="ChEBI" id="CHEBI:145989"/>
        <dbReference type="EC" id="2.5.1.19"/>
    </reaction>
    <physiologicalReaction direction="left-to-right" evidence="1">
        <dbReference type="Rhea" id="RHEA:21257"/>
    </physiologicalReaction>
</comment>
<comment type="pathway">
    <text evidence="1">Metabolic intermediate biosynthesis; chorismate biosynthesis; chorismate from D-erythrose 4-phosphate and phosphoenolpyruvate: step 6/7.</text>
</comment>
<comment type="subunit">
    <text evidence="1">Monomer.</text>
</comment>
<comment type="subcellular location">
    <subcellularLocation>
        <location evidence="1">Cytoplasm</location>
    </subcellularLocation>
</comment>
<comment type="similarity">
    <text evidence="1">Belongs to the EPSP synthase family.</text>
</comment>